<sequence>MTDTPLSLIRNFSIIAHIDHGKSTLADRLIQACGALTAREMKNQVLDSMELEQERGITIKAQTVRLTYPAKDGKVYTLNLMDTPGHVDFAYEVSRSLAACEGSLLVVDASQGVEAQTLANVYQALDANHEIVPVLNKIDLPAAEPERVRAQIEDVVGIPADDAVEISAKTGINIEGVLEALVQRLPAPTGDAEAPLQALLVDSWYDAYLGVIILVRIKDGRLKRGDRIRMMQTGATYHVDQVGVFLPKMQSVESLGPGEMGYINAAIKTVADCNVGDTVTLDKRPAEKALPGFKPSIPVVWCGLFPIDADDFEKLRDSLGKLRLNDASFHFEAETSAALGFGFRCGFLGLLHLEIIQERLSREFNLDLIATAPSVVYKMHMTDGTVEELHNPADMPELSKIEMIEEPWIKATIMVQDEYLGPVLTLCSERRGIQVDLTYVGNRAMAVYRLPLNEVVFDFYDRLKSISRGYASFDYQMDGYEESDLVRISILVNHEPVDALSFISHRTVAEQRGRSICAKLKDLIPKQLFKIAIQAAIGSKVIARETIGALSKDVTAKCYGGDISRKRKLLDKQKEGKKRMRQFGKVEIPQSAFLAALKMD</sequence>
<keyword id="KW-0997">Cell inner membrane</keyword>
<keyword id="KW-1003">Cell membrane</keyword>
<keyword id="KW-0342">GTP-binding</keyword>
<keyword id="KW-0378">Hydrolase</keyword>
<keyword id="KW-0472">Membrane</keyword>
<keyword id="KW-0547">Nucleotide-binding</keyword>
<keyword id="KW-0648">Protein biosynthesis</keyword>
<keyword id="KW-1185">Reference proteome</keyword>
<reference key="1">
    <citation type="journal article" date="2005" name="Nat. Biotechnol.">
        <title>Complete genome sequence of the acetic acid bacterium Gluconobacter oxydans.</title>
        <authorList>
            <person name="Prust C."/>
            <person name="Hoffmeister M."/>
            <person name="Liesegang H."/>
            <person name="Wiezer A."/>
            <person name="Fricke W.F."/>
            <person name="Ehrenreich A."/>
            <person name="Gottschalk G."/>
            <person name="Deppenmeier U."/>
        </authorList>
    </citation>
    <scope>NUCLEOTIDE SEQUENCE [LARGE SCALE GENOMIC DNA]</scope>
    <source>
        <strain>621H</strain>
    </source>
</reference>
<comment type="function">
    <text evidence="1">Required for accurate and efficient protein synthesis under certain stress conditions. May act as a fidelity factor of the translation reaction, by catalyzing a one-codon backward translocation of tRNAs on improperly translocated ribosomes. Back-translocation proceeds from a post-translocation (POST) complex to a pre-translocation (PRE) complex, thus giving elongation factor G a second chance to translocate the tRNAs correctly. Binds to ribosomes in a GTP-dependent manner.</text>
</comment>
<comment type="catalytic activity">
    <reaction evidence="1">
        <text>GTP + H2O = GDP + phosphate + H(+)</text>
        <dbReference type="Rhea" id="RHEA:19669"/>
        <dbReference type="ChEBI" id="CHEBI:15377"/>
        <dbReference type="ChEBI" id="CHEBI:15378"/>
        <dbReference type="ChEBI" id="CHEBI:37565"/>
        <dbReference type="ChEBI" id="CHEBI:43474"/>
        <dbReference type="ChEBI" id="CHEBI:58189"/>
        <dbReference type="EC" id="3.6.5.n1"/>
    </reaction>
</comment>
<comment type="subcellular location">
    <subcellularLocation>
        <location evidence="1">Cell inner membrane</location>
        <topology evidence="1">Peripheral membrane protein</topology>
        <orientation evidence="1">Cytoplasmic side</orientation>
    </subcellularLocation>
</comment>
<comment type="similarity">
    <text evidence="1">Belongs to the TRAFAC class translation factor GTPase superfamily. Classic translation factor GTPase family. LepA subfamily.</text>
</comment>
<comment type="sequence caution" evidence="2">
    <conflict type="erroneous initiation">
        <sequence resource="EMBL-CDS" id="AAW60024"/>
    </conflict>
</comment>
<protein>
    <recommendedName>
        <fullName evidence="1">Elongation factor 4</fullName>
        <shortName evidence="1">EF-4</shortName>
        <ecNumber evidence="1">3.6.5.n1</ecNumber>
    </recommendedName>
    <alternativeName>
        <fullName evidence="1">Ribosomal back-translocase LepA</fullName>
    </alternativeName>
</protein>
<accession>Q5FUC2</accession>
<organism>
    <name type="scientific">Gluconobacter oxydans (strain 621H)</name>
    <name type="common">Gluconobacter suboxydans</name>
    <dbReference type="NCBI Taxonomy" id="290633"/>
    <lineage>
        <taxon>Bacteria</taxon>
        <taxon>Pseudomonadati</taxon>
        <taxon>Pseudomonadota</taxon>
        <taxon>Alphaproteobacteria</taxon>
        <taxon>Acetobacterales</taxon>
        <taxon>Acetobacteraceae</taxon>
        <taxon>Gluconobacter</taxon>
    </lineage>
</organism>
<gene>
    <name evidence="1" type="primary">lepA</name>
    <name type="ordered locus">GOX0241</name>
</gene>
<evidence type="ECO:0000255" key="1">
    <source>
        <dbReference type="HAMAP-Rule" id="MF_00071"/>
    </source>
</evidence>
<evidence type="ECO:0000305" key="2"/>
<feature type="chain" id="PRO_0000224764" description="Elongation factor 4">
    <location>
        <begin position="1"/>
        <end position="600"/>
    </location>
</feature>
<feature type="domain" description="tr-type G">
    <location>
        <begin position="7"/>
        <end position="189"/>
    </location>
</feature>
<feature type="binding site" evidence="1">
    <location>
        <begin position="19"/>
        <end position="24"/>
    </location>
    <ligand>
        <name>GTP</name>
        <dbReference type="ChEBI" id="CHEBI:37565"/>
    </ligand>
</feature>
<feature type="binding site" evidence="1">
    <location>
        <begin position="136"/>
        <end position="139"/>
    </location>
    <ligand>
        <name>GTP</name>
        <dbReference type="ChEBI" id="CHEBI:37565"/>
    </ligand>
</feature>
<proteinExistence type="inferred from homology"/>
<name>LEPA_GLUOX</name>
<dbReference type="EC" id="3.6.5.n1" evidence="1"/>
<dbReference type="EMBL" id="CP000009">
    <property type="protein sequence ID" value="AAW60024.1"/>
    <property type="status" value="ALT_INIT"/>
    <property type="molecule type" value="Genomic_DNA"/>
</dbReference>
<dbReference type="RefSeq" id="WP_024717204.1">
    <property type="nucleotide sequence ID" value="NZ_LT900338.1"/>
</dbReference>
<dbReference type="SMR" id="Q5FUC2"/>
<dbReference type="STRING" id="290633.GOX0241"/>
<dbReference type="GeneID" id="56904508"/>
<dbReference type="KEGG" id="gox:GOX0241"/>
<dbReference type="eggNOG" id="COG0481">
    <property type="taxonomic scope" value="Bacteria"/>
</dbReference>
<dbReference type="HOGENOM" id="CLU_009995_3_3_5"/>
<dbReference type="Proteomes" id="UP000006375">
    <property type="component" value="Chromosome"/>
</dbReference>
<dbReference type="GO" id="GO:0005886">
    <property type="term" value="C:plasma membrane"/>
    <property type="evidence" value="ECO:0007669"/>
    <property type="project" value="UniProtKB-SubCell"/>
</dbReference>
<dbReference type="GO" id="GO:0005525">
    <property type="term" value="F:GTP binding"/>
    <property type="evidence" value="ECO:0007669"/>
    <property type="project" value="UniProtKB-UniRule"/>
</dbReference>
<dbReference type="GO" id="GO:0003924">
    <property type="term" value="F:GTPase activity"/>
    <property type="evidence" value="ECO:0007669"/>
    <property type="project" value="UniProtKB-UniRule"/>
</dbReference>
<dbReference type="GO" id="GO:0097216">
    <property type="term" value="F:guanosine tetraphosphate binding"/>
    <property type="evidence" value="ECO:0007669"/>
    <property type="project" value="UniProtKB-ARBA"/>
</dbReference>
<dbReference type="GO" id="GO:0043022">
    <property type="term" value="F:ribosome binding"/>
    <property type="evidence" value="ECO:0007669"/>
    <property type="project" value="UniProtKB-UniRule"/>
</dbReference>
<dbReference type="GO" id="GO:0003746">
    <property type="term" value="F:translation elongation factor activity"/>
    <property type="evidence" value="ECO:0007669"/>
    <property type="project" value="UniProtKB-UniRule"/>
</dbReference>
<dbReference type="GO" id="GO:0045727">
    <property type="term" value="P:positive regulation of translation"/>
    <property type="evidence" value="ECO:0007669"/>
    <property type="project" value="UniProtKB-UniRule"/>
</dbReference>
<dbReference type="CDD" id="cd03699">
    <property type="entry name" value="EF4_II"/>
    <property type="match status" value="1"/>
</dbReference>
<dbReference type="CDD" id="cd16260">
    <property type="entry name" value="EF4_III"/>
    <property type="match status" value="1"/>
</dbReference>
<dbReference type="CDD" id="cd01890">
    <property type="entry name" value="LepA"/>
    <property type="match status" value="1"/>
</dbReference>
<dbReference type="CDD" id="cd03709">
    <property type="entry name" value="lepA_C"/>
    <property type="match status" value="1"/>
</dbReference>
<dbReference type="FunFam" id="3.40.50.300:FF:000078">
    <property type="entry name" value="Elongation factor 4"/>
    <property type="match status" value="1"/>
</dbReference>
<dbReference type="FunFam" id="2.40.30.10:FF:000015">
    <property type="entry name" value="Translation factor GUF1, mitochondrial"/>
    <property type="match status" value="1"/>
</dbReference>
<dbReference type="FunFam" id="3.30.70.240:FF:000007">
    <property type="entry name" value="Translation factor GUF1, mitochondrial"/>
    <property type="match status" value="1"/>
</dbReference>
<dbReference type="FunFam" id="3.30.70.2570:FF:000001">
    <property type="entry name" value="Translation factor GUF1, mitochondrial"/>
    <property type="match status" value="1"/>
</dbReference>
<dbReference type="FunFam" id="3.30.70.870:FF:000004">
    <property type="entry name" value="Translation factor GUF1, mitochondrial"/>
    <property type="match status" value="1"/>
</dbReference>
<dbReference type="Gene3D" id="3.30.70.240">
    <property type="match status" value="1"/>
</dbReference>
<dbReference type="Gene3D" id="3.30.70.2570">
    <property type="entry name" value="Elongation factor 4, C-terminal domain"/>
    <property type="match status" value="1"/>
</dbReference>
<dbReference type="Gene3D" id="3.30.70.870">
    <property type="entry name" value="Elongation Factor G (Translational Gtpase), domain 3"/>
    <property type="match status" value="1"/>
</dbReference>
<dbReference type="Gene3D" id="3.40.50.300">
    <property type="entry name" value="P-loop containing nucleotide triphosphate hydrolases"/>
    <property type="match status" value="1"/>
</dbReference>
<dbReference type="Gene3D" id="2.40.30.10">
    <property type="entry name" value="Translation factors"/>
    <property type="match status" value="1"/>
</dbReference>
<dbReference type="HAMAP" id="MF_00071">
    <property type="entry name" value="LepA"/>
    <property type="match status" value="1"/>
</dbReference>
<dbReference type="InterPro" id="IPR006297">
    <property type="entry name" value="EF-4"/>
</dbReference>
<dbReference type="InterPro" id="IPR035647">
    <property type="entry name" value="EFG_III/V"/>
</dbReference>
<dbReference type="InterPro" id="IPR000640">
    <property type="entry name" value="EFG_V-like"/>
</dbReference>
<dbReference type="InterPro" id="IPR004161">
    <property type="entry name" value="EFTu-like_2"/>
</dbReference>
<dbReference type="InterPro" id="IPR031157">
    <property type="entry name" value="G_TR_CS"/>
</dbReference>
<dbReference type="InterPro" id="IPR038363">
    <property type="entry name" value="LepA_C_sf"/>
</dbReference>
<dbReference type="InterPro" id="IPR013842">
    <property type="entry name" value="LepA_CTD"/>
</dbReference>
<dbReference type="InterPro" id="IPR035654">
    <property type="entry name" value="LepA_IV"/>
</dbReference>
<dbReference type="InterPro" id="IPR027417">
    <property type="entry name" value="P-loop_NTPase"/>
</dbReference>
<dbReference type="InterPro" id="IPR005225">
    <property type="entry name" value="Small_GTP-bd"/>
</dbReference>
<dbReference type="InterPro" id="IPR000795">
    <property type="entry name" value="T_Tr_GTP-bd_dom"/>
</dbReference>
<dbReference type="NCBIfam" id="TIGR01393">
    <property type="entry name" value="lepA"/>
    <property type="match status" value="1"/>
</dbReference>
<dbReference type="NCBIfam" id="TIGR00231">
    <property type="entry name" value="small_GTP"/>
    <property type="match status" value="1"/>
</dbReference>
<dbReference type="PANTHER" id="PTHR43512:SF4">
    <property type="entry name" value="TRANSLATION FACTOR GUF1 HOMOLOG, CHLOROPLASTIC"/>
    <property type="match status" value="1"/>
</dbReference>
<dbReference type="PANTHER" id="PTHR43512">
    <property type="entry name" value="TRANSLATION FACTOR GUF1-RELATED"/>
    <property type="match status" value="1"/>
</dbReference>
<dbReference type="Pfam" id="PF00679">
    <property type="entry name" value="EFG_C"/>
    <property type="match status" value="1"/>
</dbReference>
<dbReference type="Pfam" id="PF00009">
    <property type="entry name" value="GTP_EFTU"/>
    <property type="match status" value="1"/>
</dbReference>
<dbReference type="Pfam" id="PF03144">
    <property type="entry name" value="GTP_EFTU_D2"/>
    <property type="match status" value="1"/>
</dbReference>
<dbReference type="Pfam" id="PF06421">
    <property type="entry name" value="LepA_C"/>
    <property type="match status" value="1"/>
</dbReference>
<dbReference type="PRINTS" id="PR00315">
    <property type="entry name" value="ELONGATNFCT"/>
</dbReference>
<dbReference type="SUPFAM" id="SSF54980">
    <property type="entry name" value="EF-G C-terminal domain-like"/>
    <property type="match status" value="2"/>
</dbReference>
<dbReference type="SUPFAM" id="SSF52540">
    <property type="entry name" value="P-loop containing nucleoside triphosphate hydrolases"/>
    <property type="match status" value="1"/>
</dbReference>
<dbReference type="PROSITE" id="PS00301">
    <property type="entry name" value="G_TR_1"/>
    <property type="match status" value="1"/>
</dbReference>
<dbReference type="PROSITE" id="PS51722">
    <property type="entry name" value="G_TR_2"/>
    <property type="match status" value="1"/>
</dbReference>